<accession>Q3IFD3</accession>
<sequence length="431" mass="48343">MNLKKLLTSAVLSISLCQSAFAAPVEIDKVIGIVNQGVILKSEVDTIVNRVKKQAEEQSQELPKDETLRVQAVERLVNQTLMMQMAERMGLEISDSQLDQTLASMAKEQGGSIADLRRTIEGSGESFQAYREEIRKEITTQQVMRANVDRRVYVSEQEVDNLLKIMESQGQNAEEYDIGHILIDIPSDASADEIASAKTRADKVIELLNDEQEFKRIAISSSSGSQALEGGQLGWMGINEMPSLFAEAVKGKKQGAIIGPLRSGAGFHIIKVQDVRGRQVVETTETRSRHILIKPSIILSEEKARSMLAGFVKDLRADKADFAKLAKEYSEDPGSALKGGEYDWADPTSYVPAFRDTLLSLKQNEISEPFRSQFGWHIVQLLDTRVADKTEQAKRNRAHGMLFNRKFKEESFNWQQEMREQAHVEIFPIDE</sequence>
<evidence type="ECO:0000255" key="1">
    <source>
        <dbReference type="HAMAP-Rule" id="MF_01183"/>
    </source>
</evidence>
<dbReference type="EC" id="5.2.1.8" evidence="1"/>
<dbReference type="EMBL" id="CR954246">
    <property type="protein sequence ID" value="CAI87681.1"/>
    <property type="molecule type" value="Genomic_DNA"/>
</dbReference>
<dbReference type="SMR" id="Q3IFD3"/>
<dbReference type="STRING" id="326442.PSHAa2633"/>
<dbReference type="KEGG" id="pha:PSHAa2633"/>
<dbReference type="PATRIC" id="fig|326442.8.peg.2543"/>
<dbReference type="eggNOG" id="COG0760">
    <property type="taxonomic scope" value="Bacteria"/>
</dbReference>
<dbReference type="HOGENOM" id="CLU_034646_11_0_6"/>
<dbReference type="BioCyc" id="PHAL326442:PSHA_RS12960-MONOMER"/>
<dbReference type="Proteomes" id="UP000006843">
    <property type="component" value="Chromosome I"/>
</dbReference>
<dbReference type="GO" id="GO:0030288">
    <property type="term" value="C:outer membrane-bounded periplasmic space"/>
    <property type="evidence" value="ECO:0007669"/>
    <property type="project" value="InterPro"/>
</dbReference>
<dbReference type="GO" id="GO:0042277">
    <property type="term" value="F:peptide binding"/>
    <property type="evidence" value="ECO:0007669"/>
    <property type="project" value="InterPro"/>
</dbReference>
<dbReference type="GO" id="GO:0003755">
    <property type="term" value="F:peptidyl-prolyl cis-trans isomerase activity"/>
    <property type="evidence" value="ECO:0007669"/>
    <property type="project" value="UniProtKB-UniRule"/>
</dbReference>
<dbReference type="GO" id="GO:0051082">
    <property type="term" value="F:unfolded protein binding"/>
    <property type="evidence" value="ECO:0007669"/>
    <property type="project" value="UniProtKB-UniRule"/>
</dbReference>
<dbReference type="GO" id="GO:0043165">
    <property type="term" value="P:Gram-negative-bacterium-type cell outer membrane assembly"/>
    <property type="evidence" value="ECO:0007669"/>
    <property type="project" value="InterPro"/>
</dbReference>
<dbReference type="GO" id="GO:0006457">
    <property type="term" value="P:protein folding"/>
    <property type="evidence" value="ECO:0007669"/>
    <property type="project" value="UniProtKB-UniRule"/>
</dbReference>
<dbReference type="GO" id="GO:0050821">
    <property type="term" value="P:protein stabilization"/>
    <property type="evidence" value="ECO:0007669"/>
    <property type="project" value="InterPro"/>
</dbReference>
<dbReference type="Gene3D" id="3.10.50.40">
    <property type="match status" value="2"/>
</dbReference>
<dbReference type="Gene3D" id="1.10.4030.10">
    <property type="entry name" value="Porin chaperone SurA, peptide-binding domain"/>
    <property type="match status" value="1"/>
</dbReference>
<dbReference type="HAMAP" id="MF_01183">
    <property type="entry name" value="Chaperone_SurA"/>
    <property type="match status" value="1"/>
</dbReference>
<dbReference type="InterPro" id="IPR050280">
    <property type="entry name" value="OMP_Chaperone_SurA"/>
</dbReference>
<dbReference type="InterPro" id="IPR046357">
    <property type="entry name" value="PPIase_dom_sf"/>
</dbReference>
<dbReference type="InterPro" id="IPR000297">
    <property type="entry name" value="PPIase_PpiC"/>
</dbReference>
<dbReference type="InterPro" id="IPR023034">
    <property type="entry name" value="PPIase_SurA"/>
</dbReference>
<dbReference type="InterPro" id="IPR015391">
    <property type="entry name" value="SurA_N"/>
</dbReference>
<dbReference type="InterPro" id="IPR027304">
    <property type="entry name" value="Trigger_fact/SurA_dom_sf"/>
</dbReference>
<dbReference type="NCBIfam" id="NF008038">
    <property type="entry name" value="PRK10770.1"/>
    <property type="match status" value="1"/>
</dbReference>
<dbReference type="PANTHER" id="PTHR47637">
    <property type="entry name" value="CHAPERONE SURA"/>
    <property type="match status" value="1"/>
</dbReference>
<dbReference type="PANTHER" id="PTHR47637:SF1">
    <property type="entry name" value="CHAPERONE SURA"/>
    <property type="match status" value="1"/>
</dbReference>
<dbReference type="Pfam" id="PF00639">
    <property type="entry name" value="Rotamase"/>
    <property type="match status" value="1"/>
</dbReference>
<dbReference type="Pfam" id="PF13616">
    <property type="entry name" value="Rotamase_3"/>
    <property type="match status" value="1"/>
</dbReference>
<dbReference type="Pfam" id="PF09312">
    <property type="entry name" value="SurA_N"/>
    <property type="match status" value="1"/>
</dbReference>
<dbReference type="SUPFAM" id="SSF54534">
    <property type="entry name" value="FKBP-like"/>
    <property type="match status" value="2"/>
</dbReference>
<dbReference type="SUPFAM" id="SSF109998">
    <property type="entry name" value="Triger factor/SurA peptide-binding domain-like"/>
    <property type="match status" value="1"/>
</dbReference>
<dbReference type="PROSITE" id="PS50198">
    <property type="entry name" value="PPIC_PPIASE_2"/>
    <property type="match status" value="2"/>
</dbReference>
<proteinExistence type="inferred from homology"/>
<gene>
    <name evidence="1" type="primary">surA</name>
    <name type="ordered locus">PSHAa2633</name>
</gene>
<name>SURA_PSET1</name>
<protein>
    <recommendedName>
        <fullName evidence="1">Chaperone SurA</fullName>
    </recommendedName>
    <alternativeName>
        <fullName evidence="1">Peptidyl-prolyl cis-trans isomerase SurA</fullName>
        <shortName evidence="1">PPIase SurA</shortName>
        <ecNumber evidence="1">5.2.1.8</ecNumber>
    </alternativeName>
    <alternativeName>
        <fullName evidence="1">Rotamase SurA</fullName>
    </alternativeName>
</protein>
<organism>
    <name type="scientific">Pseudoalteromonas translucida (strain TAC 125)</name>
    <dbReference type="NCBI Taxonomy" id="326442"/>
    <lineage>
        <taxon>Bacteria</taxon>
        <taxon>Pseudomonadati</taxon>
        <taxon>Pseudomonadota</taxon>
        <taxon>Gammaproteobacteria</taxon>
        <taxon>Alteromonadales</taxon>
        <taxon>Pseudoalteromonadaceae</taxon>
        <taxon>Pseudoalteromonas</taxon>
    </lineage>
</organism>
<feature type="signal peptide" evidence="1">
    <location>
        <begin position="1"/>
        <end position="22"/>
    </location>
</feature>
<feature type="chain" id="PRO_0000270025" description="Chaperone SurA">
    <location>
        <begin position="23"/>
        <end position="431"/>
    </location>
</feature>
<feature type="domain" description="PpiC 1" evidence="1">
    <location>
        <begin position="173"/>
        <end position="274"/>
    </location>
</feature>
<feature type="domain" description="PpiC 2" evidence="1">
    <location>
        <begin position="283"/>
        <end position="383"/>
    </location>
</feature>
<keyword id="KW-0143">Chaperone</keyword>
<keyword id="KW-0413">Isomerase</keyword>
<keyword id="KW-0574">Periplasm</keyword>
<keyword id="KW-1185">Reference proteome</keyword>
<keyword id="KW-0677">Repeat</keyword>
<keyword id="KW-0697">Rotamase</keyword>
<keyword id="KW-0732">Signal</keyword>
<comment type="function">
    <text evidence="1">Chaperone involved in the correct folding and assembly of outer membrane proteins. Recognizes specific patterns of aromatic residues and the orientation of their side chains, which are found more frequently in integral outer membrane proteins. May act in both early periplasmic and late outer membrane-associated steps of protein maturation.</text>
</comment>
<comment type="catalytic activity">
    <reaction evidence="1">
        <text>[protein]-peptidylproline (omega=180) = [protein]-peptidylproline (omega=0)</text>
        <dbReference type="Rhea" id="RHEA:16237"/>
        <dbReference type="Rhea" id="RHEA-COMP:10747"/>
        <dbReference type="Rhea" id="RHEA-COMP:10748"/>
        <dbReference type="ChEBI" id="CHEBI:83833"/>
        <dbReference type="ChEBI" id="CHEBI:83834"/>
        <dbReference type="EC" id="5.2.1.8"/>
    </reaction>
</comment>
<comment type="subcellular location">
    <subcellularLocation>
        <location evidence="1">Periplasm</location>
    </subcellularLocation>
    <text evidence="1">Is capable of associating with the outer membrane.</text>
</comment>
<comment type="domain">
    <text evidence="1">The PPIase activity resides only in the second parvulin domain. The N-terminal region and the C-terminal tail are necessary and sufficient for the chaperone activity of SurA. The PPIase activity is dispensable for SurA to function as a chaperone. The N-terminal region and the C-terminal tail are also required for porin recognition.</text>
</comment>
<reference key="1">
    <citation type="journal article" date="2005" name="Genome Res.">
        <title>Coping with cold: the genome of the versatile marine Antarctica bacterium Pseudoalteromonas haloplanktis TAC125.</title>
        <authorList>
            <person name="Medigue C."/>
            <person name="Krin E."/>
            <person name="Pascal G."/>
            <person name="Barbe V."/>
            <person name="Bernsel A."/>
            <person name="Bertin P.N."/>
            <person name="Cheung F."/>
            <person name="Cruveiller S."/>
            <person name="D'Amico S."/>
            <person name="Duilio A."/>
            <person name="Fang G."/>
            <person name="Feller G."/>
            <person name="Ho C."/>
            <person name="Mangenot S."/>
            <person name="Marino G."/>
            <person name="Nilsson J."/>
            <person name="Parrilli E."/>
            <person name="Rocha E.P.C."/>
            <person name="Rouy Z."/>
            <person name="Sekowska A."/>
            <person name="Tutino M.L."/>
            <person name="Vallenet D."/>
            <person name="von Heijne G."/>
            <person name="Danchin A."/>
        </authorList>
    </citation>
    <scope>NUCLEOTIDE SEQUENCE [LARGE SCALE GENOMIC DNA]</scope>
    <source>
        <strain>TAC 125</strain>
    </source>
</reference>